<accession>O32204</accession>
<accession>Q7B2K7</accession>
<dbReference type="EMBL" id="AJ223978">
    <property type="protein sequence ID" value="CAA11718.1"/>
    <property type="molecule type" value="Genomic_DNA"/>
</dbReference>
<dbReference type="EMBL" id="AL009126">
    <property type="protein sequence ID" value="CAB15339.1"/>
    <property type="molecule type" value="Genomic_DNA"/>
</dbReference>
<dbReference type="PIR" id="D70048">
    <property type="entry name" value="D70048"/>
</dbReference>
<dbReference type="RefSeq" id="WP_003244227.1">
    <property type="nucleotide sequence ID" value="NZ_OZ025638.1"/>
</dbReference>
<dbReference type="SMR" id="O32204"/>
<dbReference type="FunCoup" id="O32204">
    <property type="interactions" value="86"/>
</dbReference>
<dbReference type="STRING" id="224308.BSU33330"/>
<dbReference type="TCDB" id="2.A.3.2.6">
    <property type="family name" value="the amino acid-polyamine-organocation (apc) family"/>
</dbReference>
<dbReference type="PaxDb" id="224308-BSU33330"/>
<dbReference type="EnsemblBacteria" id="CAB15339">
    <property type="protein sequence ID" value="CAB15339"/>
    <property type="gene ID" value="BSU_33330"/>
</dbReference>
<dbReference type="GeneID" id="936000"/>
<dbReference type="KEGG" id="bsu:BSU33330"/>
<dbReference type="PATRIC" id="fig|224308.179.peg.3618"/>
<dbReference type="eggNOG" id="COG0531">
    <property type="taxonomic scope" value="Bacteria"/>
</dbReference>
<dbReference type="InParanoid" id="O32204"/>
<dbReference type="OrthoDB" id="9762947at2"/>
<dbReference type="PhylomeDB" id="O32204"/>
<dbReference type="BioCyc" id="BSUB:BSU33330-MONOMER"/>
<dbReference type="Proteomes" id="UP000001570">
    <property type="component" value="Chromosome"/>
</dbReference>
<dbReference type="GO" id="GO:0005886">
    <property type="term" value="C:plasma membrane"/>
    <property type="evidence" value="ECO:0007669"/>
    <property type="project" value="UniProtKB-SubCell"/>
</dbReference>
<dbReference type="GO" id="GO:0015297">
    <property type="term" value="F:antiporter activity"/>
    <property type="evidence" value="ECO:0007669"/>
    <property type="project" value="UniProtKB-KW"/>
</dbReference>
<dbReference type="GO" id="GO:0006865">
    <property type="term" value="P:amino acid transport"/>
    <property type="evidence" value="ECO:0007669"/>
    <property type="project" value="UniProtKB-KW"/>
</dbReference>
<dbReference type="Gene3D" id="1.20.1740.10">
    <property type="entry name" value="Amino acid/polyamine transporter I"/>
    <property type="match status" value="1"/>
</dbReference>
<dbReference type="InterPro" id="IPR002293">
    <property type="entry name" value="AA/rel_permease1"/>
</dbReference>
<dbReference type="InterPro" id="IPR050367">
    <property type="entry name" value="APC_superfamily"/>
</dbReference>
<dbReference type="PANTHER" id="PTHR42770">
    <property type="entry name" value="AMINO ACID TRANSPORTER-RELATED"/>
    <property type="match status" value="1"/>
</dbReference>
<dbReference type="PANTHER" id="PTHR42770:SF14">
    <property type="entry name" value="ARGININE_ORNITHINE ANTIPORTER-RELATED"/>
    <property type="match status" value="1"/>
</dbReference>
<dbReference type="Pfam" id="PF13520">
    <property type="entry name" value="AA_permease_2"/>
    <property type="match status" value="1"/>
</dbReference>
<dbReference type="PIRSF" id="PIRSF006060">
    <property type="entry name" value="AA_transporter"/>
    <property type="match status" value="1"/>
</dbReference>
<comment type="function">
    <text evidence="1">Catalyzes electroneutral exchange between L-arginine and L-ornithine.</text>
</comment>
<comment type="catalytic activity">
    <reaction evidence="1">
        <text>L-ornithine(in) + L-arginine(out) = L-ornithine(out) + L-arginine(in)</text>
        <dbReference type="Rhea" id="RHEA:34991"/>
        <dbReference type="ChEBI" id="CHEBI:32682"/>
        <dbReference type="ChEBI" id="CHEBI:46911"/>
    </reaction>
</comment>
<comment type="subcellular location">
    <subcellularLocation>
        <location evidence="3">Cell membrane</location>
        <topology evidence="2">Multi-pass membrane protein</topology>
    </subcellularLocation>
</comment>
<comment type="similarity">
    <text evidence="3">Belongs to the amino acid-polyamine-organocation (APC) superfamily. Basic amino acid/polyamine antiporter (APA) (TC 2.A.3.2) family.</text>
</comment>
<comment type="caution">
    <text evidence="3">Has been described as a LysP lysine permease, due in part to the presence of LYS elements in the regulatory region.</text>
</comment>
<keyword id="KW-0029">Amino-acid transport</keyword>
<keyword id="KW-0050">Antiport</keyword>
<keyword id="KW-1003">Cell membrane</keyword>
<keyword id="KW-0472">Membrane</keyword>
<keyword id="KW-1185">Reference proteome</keyword>
<keyword id="KW-0812">Transmembrane</keyword>
<keyword id="KW-1133">Transmembrane helix</keyword>
<keyword id="KW-0813">Transport</keyword>
<proteinExistence type="inferred from homology"/>
<gene>
    <name type="primary">yvsH</name>
    <name type="ordered locus">BSU33330</name>
</gene>
<protein>
    <recommendedName>
        <fullName evidence="1">Putative arginine/ornithine antiporter</fullName>
    </recommendedName>
</protein>
<reference key="1">
    <citation type="journal article" date="1998" name="Microbiology">
        <title>The yvsA-yvqA (293 degrees - 289 degrees) region of the Bacillus subtilis chromosome containing genes involved in metal ion uptake and a putative sigma factor.</title>
        <authorList>
            <person name="Wipat A."/>
            <person name="Brignell C.S."/>
            <person name="Guy J.B."/>
            <person name="Rose M."/>
            <person name="Emmerson P.T."/>
            <person name="Harwood C.R."/>
        </authorList>
    </citation>
    <scope>NUCLEOTIDE SEQUENCE [GENOMIC DNA]</scope>
    <source>
        <strain>168</strain>
    </source>
</reference>
<reference key="2">
    <citation type="journal article" date="1997" name="Nature">
        <title>The complete genome sequence of the Gram-positive bacterium Bacillus subtilis.</title>
        <authorList>
            <person name="Kunst F."/>
            <person name="Ogasawara N."/>
            <person name="Moszer I."/>
            <person name="Albertini A.M."/>
            <person name="Alloni G."/>
            <person name="Azevedo V."/>
            <person name="Bertero M.G."/>
            <person name="Bessieres P."/>
            <person name="Bolotin A."/>
            <person name="Borchert S."/>
            <person name="Borriss R."/>
            <person name="Boursier L."/>
            <person name="Brans A."/>
            <person name="Braun M."/>
            <person name="Brignell S.C."/>
            <person name="Bron S."/>
            <person name="Brouillet S."/>
            <person name="Bruschi C.V."/>
            <person name="Caldwell B."/>
            <person name="Capuano V."/>
            <person name="Carter N.M."/>
            <person name="Choi S.-K."/>
            <person name="Codani J.-J."/>
            <person name="Connerton I.F."/>
            <person name="Cummings N.J."/>
            <person name="Daniel R.A."/>
            <person name="Denizot F."/>
            <person name="Devine K.M."/>
            <person name="Duesterhoeft A."/>
            <person name="Ehrlich S.D."/>
            <person name="Emmerson P.T."/>
            <person name="Entian K.-D."/>
            <person name="Errington J."/>
            <person name="Fabret C."/>
            <person name="Ferrari E."/>
            <person name="Foulger D."/>
            <person name="Fritz C."/>
            <person name="Fujita M."/>
            <person name="Fujita Y."/>
            <person name="Fuma S."/>
            <person name="Galizzi A."/>
            <person name="Galleron N."/>
            <person name="Ghim S.-Y."/>
            <person name="Glaser P."/>
            <person name="Goffeau A."/>
            <person name="Golightly E.J."/>
            <person name="Grandi G."/>
            <person name="Guiseppi G."/>
            <person name="Guy B.J."/>
            <person name="Haga K."/>
            <person name="Haiech J."/>
            <person name="Harwood C.R."/>
            <person name="Henaut A."/>
            <person name="Hilbert H."/>
            <person name="Holsappel S."/>
            <person name="Hosono S."/>
            <person name="Hullo M.-F."/>
            <person name="Itaya M."/>
            <person name="Jones L.-M."/>
            <person name="Joris B."/>
            <person name="Karamata D."/>
            <person name="Kasahara Y."/>
            <person name="Klaerr-Blanchard M."/>
            <person name="Klein C."/>
            <person name="Kobayashi Y."/>
            <person name="Koetter P."/>
            <person name="Koningstein G."/>
            <person name="Krogh S."/>
            <person name="Kumano M."/>
            <person name="Kurita K."/>
            <person name="Lapidus A."/>
            <person name="Lardinois S."/>
            <person name="Lauber J."/>
            <person name="Lazarevic V."/>
            <person name="Lee S.-M."/>
            <person name="Levine A."/>
            <person name="Liu H."/>
            <person name="Masuda S."/>
            <person name="Mauel C."/>
            <person name="Medigue C."/>
            <person name="Medina N."/>
            <person name="Mellado R.P."/>
            <person name="Mizuno M."/>
            <person name="Moestl D."/>
            <person name="Nakai S."/>
            <person name="Noback M."/>
            <person name="Noone D."/>
            <person name="O'Reilly M."/>
            <person name="Ogawa K."/>
            <person name="Ogiwara A."/>
            <person name="Oudega B."/>
            <person name="Park S.-H."/>
            <person name="Parro V."/>
            <person name="Pohl T.M."/>
            <person name="Portetelle D."/>
            <person name="Porwollik S."/>
            <person name="Prescott A.M."/>
            <person name="Presecan E."/>
            <person name="Pujic P."/>
            <person name="Purnelle B."/>
            <person name="Rapoport G."/>
            <person name="Rey M."/>
            <person name="Reynolds S."/>
            <person name="Rieger M."/>
            <person name="Rivolta C."/>
            <person name="Rocha E."/>
            <person name="Roche B."/>
            <person name="Rose M."/>
            <person name="Sadaie Y."/>
            <person name="Sato T."/>
            <person name="Scanlan E."/>
            <person name="Schleich S."/>
            <person name="Schroeter R."/>
            <person name="Scoffone F."/>
            <person name="Sekiguchi J."/>
            <person name="Sekowska A."/>
            <person name="Seror S.J."/>
            <person name="Serror P."/>
            <person name="Shin B.-S."/>
            <person name="Soldo B."/>
            <person name="Sorokin A."/>
            <person name="Tacconi E."/>
            <person name="Takagi T."/>
            <person name="Takahashi H."/>
            <person name="Takemaru K."/>
            <person name="Takeuchi M."/>
            <person name="Tamakoshi A."/>
            <person name="Tanaka T."/>
            <person name="Terpstra P."/>
            <person name="Tognoni A."/>
            <person name="Tosato V."/>
            <person name="Uchiyama S."/>
            <person name="Vandenbol M."/>
            <person name="Vannier F."/>
            <person name="Vassarotti A."/>
            <person name="Viari A."/>
            <person name="Wambutt R."/>
            <person name="Wedler E."/>
            <person name="Wedler H."/>
            <person name="Weitzenegger T."/>
            <person name="Winters P."/>
            <person name="Wipat A."/>
            <person name="Yamamoto H."/>
            <person name="Yamane K."/>
            <person name="Yasumoto K."/>
            <person name="Yata K."/>
            <person name="Yoshida K."/>
            <person name="Yoshikawa H.-F."/>
            <person name="Zumstein E."/>
            <person name="Yoshikawa H."/>
            <person name="Danchin A."/>
        </authorList>
    </citation>
    <scope>NUCLEOTIDE SEQUENCE [LARGE SCALE GENOMIC DNA]</scope>
    <source>
        <strain>168</strain>
    </source>
</reference>
<organism>
    <name type="scientific">Bacillus subtilis (strain 168)</name>
    <dbReference type="NCBI Taxonomy" id="224308"/>
    <lineage>
        <taxon>Bacteria</taxon>
        <taxon>Bacillati</taxon>
        <taxon>Bacillota</taxon>
        <taxon>Bacilli</taxon>
        <taxon>Bacillales</taxon>
        <taxon>Bacillaceae</taxon>
        <taxon>Bacillus</taxon>
    </lineage>
</organism>
<name>ARCD_BACSU</name>
<feature type="chain" id="PRO_0000360837" description="Putative arginine/ornithine antiporter">
    <location>
        <begin position="1"/>
        <end position="469"/>
    </location>
</feature>
<feature type="transmembrane region" description="Helical" evidence="2">
    <location>
        <begin position="8"/>
        <end position="28"/>
    </location>
</feature>
<feature type="transmembrane region" description="Helical" evidence="2">
    <location>
        <begin position="44"/>
        <end position="64"/>
    </location>
</feature>
<feature type="transmembrane region" description="Helical" evidence="2">
    <location>
        <begin position="90"/>
        <end position="110"/>
    </location>
</feature>
<feature type="transmembrane region" description="Helical" evidence="2">
    <location>
        <begin position="144"/>
        <end position="164"/>
    </location>
</feature>
<feature type="transmembrane region" description="Helical" evidence="2">
    <location>
        <begin position="179"/>
        <end position="199"/>
    </location>
</feature>
<feature type="transmembrane region" description="Helical" evidence="2">
    <location>
        <begin position="213"/>
        <end position="233"/>
    </location>
</feature>
<feature type="transmembrane region" description="Helical" evidence="2">
    <location>
        <begin position="254"/>
        <end position="274"/>
    </location>
</feature>
<feature type="transmembrane region" description="Helical" evidence="2">
    <location>
        <begin position="301"/>
        <end position="321"/>
    </location>
</feature>
<feature type="transmembrane region" description="Helical" evidence="2">
    <location>
        <begin position="347"/>
        <end position="367"/>
    </location>
</feature>
<feature type="transmembrane region" description="Helical" evidence="2">
    <location>
        <begin position="375"/>
        <end position="395"/>
    </location>
</feature>
<feature type="transmembrane region" description="Helical" evidence="2">
    <location>
        <begin position="417"/>
        <end position="437"/>
    </location>
</feature>
<feature type="transmembrane region" description="Helical" evidence="2">
    <location>
        <begin position="439"/>
        <end position="459"/>
    </location>
</feature>
<sequence>MEQTKKWGFWLLTAFVVGNMVGSGIFSLPSSLASIASPFGATSAWLLTGAGVLMIALVFGHLSIRKPELTAGPQSYARALFSDPKKGNAAGFTMVWGYWVASWISNVAIITSLAGYLTSFFPILVDKREMFSIGGQEVTLGQLLTFAVCTILLWGTHAILVASINGASKLNFVTTLSKVLGFVFFIVAGLFVFQTSLFGHFYFPVQGENGTSIGIGGQVHNAAISTLWAFVGIESAVILSGRARSQRDVKRATITGLLIALSIYIIVTLITMGVLPHDKLVGSEKPFVDVLYAIVGNAGSVIMALLAILCLFGTMLGWILLGSEVPYQAAKAGDFPAFFAKTNKKGSPVIALIITNVMSQVFIFSVISRTISDAFTFLTTAATLAYLIPYLVSAIYSLKVVIKGETYDQLKGSRVRDGLIAILACAYSVFVIVTGTADLTTFILGIGLFFVGLIVYPFVSNKFQKEKQA</sequence>
<evidence type="ECO:0000250" key="1">
    <source>
        <dbReference type="UniProtKB" id="A2RNI5"/>
    </source>
</evidence>
<evidence type="ECO:0000255" key="2"/>
<evidence type="ECO:0000305" key="3"/>